<keyword id="KW-0687">Ribonucleoprotein</keyword>
<keyword id="KW-0689">Ribosomal protein</keyword>
<keyword id="KW-0694">RNA-binding</keyword>
<keyword id="KW-0699">rRNA-binding</keyword>
<feature type="chain" id="PRO_0000266463" description="Large ribosomal subunit protein uL14">
    <location>
        <begin position="1"/>
        <end position="122"/>
    </location>
</feature>
<evidence type="ECO:0000255" key="1">
    <source>
        <dbReference type="HAMAP-Rule" id="MF_01367"/>
    </source>
</evidence>
<evidence type="ECO:0000305" key="2"/>
<accession>Q3JMS3</accession>
<gene>
    <name evidence="1" type="primary">rplN</name>
    <name type="ordered locus">BURPS1710b_3766</name>
</gene>
<comment type="function">
    <text evidence="1">Binds to 23S rRNA. Forms part of two intersubunit bridges in the 70S ribosome.</text>
</comment>
<comment type="subunit">
    <text evidence="1">Part of the 50S ribosomal subunit. Forms a cluster with proteins L3 and L19. In the 70S ribosome, L14 and L19 interact and together make contacts with the 16S rRNA in bridges B5 and B8.</text>
</comment>
<comment type="similarity">
    <text evidence="1">Belongs to the universal ribosomal protein uL14 family.</text>
</comment>
<comment type="sequence caution" evidence="2">
    <conflict type="erroneous initiation">
        <sequence resource="EMBL-CDS" id="ABA48349"/>
    </conflict>
</comment>
<proteinExistence type="inferred from homology"/>
<name>RL14_BURP1</name>
<dbReference type="EMBL" id="CP000124">
    <property type="protein sequence ID" value="ABA48349.1"/>
    <property type="status" value="ALT_INIT"/>
    <property type="molecule type" value="Genomic_DNA"/>
</dbReference>
<dbReference type="RefSeq" id="WP_004197951.1">
    <property type="nucleotide sequence ID" value="NC_007434.1"/>
</dbReference>
<dbReference type="SMR" id="Q3JMS3"/>
<dbReference type="EnsemblBacteria" id="ABA48349">
    <property type="protein sequence ID" value="ABA48349"/>
    <property type="gene ID" value="BURPS1710b_3766"/>
</dbReference>
<dbReference type="GeneID" id="93171007"/>
<dbReference type="KEGG" id="bpm:BURPS1710b_3766"/>
<dbReference type="HOGENOM" id="CLU_095071_1_1_4"/>
<dbReference type="Proteomes" id="UP000002700">
    <property type="component" value="Chromosome I"/>
</dbReference>
<dbReference type="GO" id="GO:0022625">
    <property type="term" value="C:cytosolic large ribosomal subunit"/>
    <property type="evidence" value="ECO:0007669"/>
    <property type="project" value="TreeGrafter"/>
</dbReference>
<dbReference type="GO" id="GO:0070180">
    <property type="term" value="F:large ribosomal subunit rRNA binding"/>
    <property type="evidence" value="ECO:0007669"/>
    <property type="project" value="TreeGrafter"/>
</dbReference>
<dbReference type="GO" id="GO:0003735">
    <property type="term" value="F:structural constituent of ribosome"/>
    <property type="evidence" value="ECO:0007669"/>
    <property type="project" value="InterPro"/>
</dbReference>
<dbReference type="GO" id="GO:0006412">
    <property type="term" value="P:translation"/>
    <property type="evidence" value="ECO:0007669"/>
    <property type="project" value="UniProtKB-UniRule"/>
</dbReference>
<dbReference type="CDD" id="cd00337">
    <property type="entry name" value="Ribosomal_uL14"/>
    <property type="match status" value="1"/>
</dbReference>
<dbReference type="FunFam" id="2.40.150.20:FF:000001">
    <property type="entry name" value="50S ribosomal protein L14"/>
    <property type="match status" value="1"/>
</dbReference>
<dbReference type="Gene3D" id="2.40.150.20">
    <property type="entry name" value="Ribosomal protein L14"/>
    <property type="match status" value="1"/>
</dbReference>
<dbReference type="HAMAP" id="MF_01367">
    <property type="entry name" value="Ribosomal_uL14"/>
    <property type="match status" value="1"/>
</dbReference>
<dbReference type="InterPro" id="IPR000218">
    <property type="entry name" value="Ribosomal_uL14"/>
</dbReference>
<dbReference type="InterPro" id="IPR005745">
    <property type="entry name" value="Ribosomal_uL14_bac-type"/>
</dbReference>
<dbReference type="InterPro" id="IPR019972">
    <property type="entry name" value="Ribosomal_uL14_CS"/>
</dbReference>
<dbReference type="InterPro" id="IPR036853">
    <property type="entry name" value="Ribosomal_uL14_sf"/>
</dbReference>
<dbReference type="NCBIfam" id="TIGR01067">
    <property type="entry name" value="rplN_bact"/>
    <property type="match status" value="1"/>
</dbReference>
<dbReference type="PANTHER" id="PTHR11761">
    <property type="entry name" value="50S/60S RIBOSOMAL PROTEIN L14/L23"/>
    <property type="match status" value="1"/>
</dbReference>
<dbReference type="PANTHER" id="PTHR11761:SF3">
    <property type="entry name" value="LARGE RIBOSOMAL SUBUNIT PROTEIN UL14M"/>
    <property type="match status" value="1"/>
</dbReference>
<dbReference type="Pfam" id="PF00238">
    <property type="entry name" value="Ribosomal_L14"/>
    <property type="match status" value="1"/>
</dbReference>
<dbReference type="SMART" id="SM01374">
    <property type="entry name" value="Ribosomal_L14"/>
    <property type="match status" value="1"/>
</dbReference>
<dbReference type="SUPFAM" id="SSF50193">
    <property type="entry name" value="Ribosomal protein L14"/>
    <property type="match status" value="1"/>
</dbReference>
<dbReference type="PROSITE" id="PS00049">
    <property type="entry name" value="RIBOSOMAL_L14"/>
    <property type="match status" value="1"/>
</dbReference>
<sequence>MIQTESRLEVADNTGAREVMCIKVLGGSKRRYASIGDIIKVSVKEATPRGRVKKGEIYNAVVVRTAKGVRRQDGSLIKFDGNAAVLLNNKLEPIGTRIFGPVTRELRSERFMKIVSLAPEVL</sequence>
<reference key="1">
    <citation type="journal article" date="2010" name="Genome Biol. Evol.">
        <title>Continuing evolution of Burkholderia mallei through genome reduction and large-scale rearrangements.</title>
        <authorList>
            <person name="Losada L."/>
            <person name="Ronning C.M."/>
            <person name="DeShazer D."/>
            <person name="Woods D."/>
            <person name="Fedorova N."/>
            <person name="Kim H.S."/>
            <person name="Shabalina S.A."/>
            <person name="Pearson T.R."/>
            <person name="Brinkac L."/>
            <person name="Tan P."/>
            <person name="Nandi T."/>
            <person name="Crabtree J."/>
            <person name="Badger J."/>
            <person name="Beckstrom-Sternberg S."/>
            <person name="Saqib M."/>
            <person name="Schutzer S.E."/>
            <person name="Keim P."/>
            <person name="Nierman W.C."/>
        </authorList>
    </citation>
    <scope>NUCLEOTIDE SEQUENCE [LARGE SCALE GENOMIC DNA]</scope>
    <source>
        <strain>1710b</strain>
    </source>
</reference>
<protein>
    <recommendedName>
        <fullName evidence="1">Large ribosomal subunit protein uL14</fullName>
    </recommendedName>
    <alternativeName>
        <fullName evidence="2">50S ribosomal protein L14</fullName>
    </alternativeName>
</protein>
<organism>
    <name type="scientific">Burkholderia pseudomallei (strain 1710b)</name>
    <dbReference type="NCBI Taxonomy" id="320372"/>
    <lineage>
        <taxon>Bacteria</taxon>
        <taxon>Pseudomonadati</taxon>
        <taxon>Pseudomonadota</taxon>
        <taxon>Betaproteobacteria</taxon>
        <taxon>Burkholderiales</taxon>
        <taxon>Burkholderiaceae</taxon>
        <taxon>Burkholderia</taxon>
        <taxon>pseudomallei group</taxon>
    </lineage>
</organism>